<protein>
    <recommendedName>
        <fullName>Chromodomain-helicase-DNA-binding protein 1-like</fullName>
        <ecNumber evidence="1">3.6.4.-</ecNumber>
    </recommendedName>
</protein>
<comment type="function">
    <text evidence="1">ATP-dependent chromatin remodeler that mediates chromatin-remodeling following DNA damage. Recruited to DNA damage sites through interaction with poly-ADP-ribose: specifically recognizes and binds histones that are poly-ADP-ribosylated on serine residues in response to DNA damage. Poly-ADP-ribose-binding activates the ATP-dependent chromatin remodeler activity, thereby regulating chromatin during DNA repair. Catalyzes nucleosome sliding away from DNA breaks in an ATP-dependent manner. Chromatin remodeling activity promotes PARP2 removal from chromatin.</text>
</comment>
<comment type="catalytic activity">
    <reaction evidence="1">
        <text>ATP + H2O = ADP + phosphate + H(+)</text>
        <dbReference type="Rhea" id="RHEA:13065"/>
        <dbReference type="ChEBI" id="CHEBI:15377"/>
        <dbReference type="ChEBI" id="CHEBI:15378"/>
        <dbReference type="ChEBI" id="CHEBI:30616"/>
        <dbReference type="ChEBI" id="CHEBI:43474"/>
        <dbReference type="ChEBI" id="CHEBI:456216"/>
    </reaction>
    <physiologicalReaction direction="left-to-right" evidence="1">
        <dbReference type="Rhea" id="RHEA:13066"/>
    </physiologicalReaction>
</comment>
<comment type="activity regulation">
    <text evidence="1">Adopts an inactive conformation in absence of DNA damage. Binding to poly-ADP-ribosylated histones activates the ATP-dependent chromatin remodeler activity.</text>
</comment>
<comment type="subunit">
    <text evidence="1">Interacts with nucleosomes; interacts with the acidic patch of histones. Interacts (via macro domain) with PARP1; interacts only when PARP1 is poly-ADP-ribosylated (PARylated). Interacts with CIAO1.</text>
</comment>
<comment type="subcellular location">
    <subcellularLocation>
        <location evidence="1">Nucleus</location>
    </subcellularLocation>
    <subcellularLocation>
        <location evidence="1">Chromosome</location>
    </subcellularLocation>
    <text evidence="1">Localizes at sites of DNA damage; recruited by histones H2B and H3 poly-ADP-ribosylated on 'Ser-6' and 'Ser-10', respectively (H2BS6ADPr and H3S10ADPr) by PARP1 or PARP2.</text>
</comment>
<comment type="alternative products">
    <event type="alternative splicing"/>
    <isoform>
        <id>Q9CXF7-1</id>
        <name>1</name>
        <sequence type="displayed"/>
    </isoform>
    <isoform>
        <id>Q9CXF7-2</id>
        <name>2</name>
        <sequence type="described" ref="VSP_033343"/>
    </isoform>
</comment>
<comment type="domain">
    <text evidence="1">The macro domain mediates non-covalent poly(ADP-ribose)-binding and recruitment to DNA damage sites. Mediates auto-inhibition of ATPase activity by interacting with the N-terminal ATPase module, encompassing the helicase ATP-binding domain and helicase C-terminal domain. Binding to poly-ADP-ribosylated histones upon DNA damage releases the auto-inhibition by the macro domain and trigger ATPase activity. Does not bind monomeric ADP-ribose and mono-ADP-ribose fails to release the auto-inhibition of the ATPase module by the macro domain.</text>
</comment>
<comment type="similarity">
    <text evidence="8">Belongs to the SNF2/RAD54 helicase family.</text>
</comment>
<name>CHD1L_MOUSE</name>
<accession>Q9CXF7</accession>
<accession>Q3TMX1</accession>
<accession>Q6P5C0</accession>
<keyword id="KW-0025">Alternative splicing</keyword>
<keyword id="KW-0067">ATP-binding</keyword>
<keyword id="KW-0158">Chromosome</keyword>
<keyword id="KW-0175">Coiled coil</keyword>
<keyword id="KW-0227">DNA damage</keyword>
<keyword id="KW-0234">DNA repair</keyword>
<keyword id="KW-0378">Hydrolase</keyword>
<keyword id="KW-0547">Nucleotide-binding</keyword>
<keyword id="KW-0539">Nucleus</keyword>
<keyword id="KW-0597">Phosphoprotein</keyword>
<keyword id="KW-1185">Reference proteome</keyword>
<organism>
    <name type="scientific">Mus musculus</name>
    <name type="common">Mouse</name>
    <dbReference type="NCBI Taxonomy" id="10090"/>
    <lineage>
        <taxon>Eukaryota</taxon>
        <taxon>Metazoa</taxon>
        <taxon>Chordata</taxon>
        <taxon>Craniata</taxon>
        <taxon>Vertebrata</taxon>
        <taxon>Euteleostomi</taxon>
        <taxon>Mammalia</taxon>
        <taxon>Eutheria</taxon>
        <taxon>Euarchontoglires</taxon>
        <taxon>Glires</taxon>
        <taxon>Rodentia</taxon>
        <taxon>Myomorpha</taxon>
        <taxon>Muroidea</taxon>
        <taxon>Muridae</taxon>
        <taxon>Murinae</taxon>
        <taxon>Mus</taxon>
        <taxon>Mus</taxon>
    </lineage>
</organism>
<proteinExistence type="evidence at protein level"/>
<evidence type="ECO:0000250" key="1">
    <source>
        <dbReference type="UniProtKB" id="Q86WJ1"/>
    </source>
</evidence>
<evidence type="ECO:0000255" key="2"/>
<evidence type="ECO:0000255" key="3">
    <source>
        <dbReference type="PROSITE-ProRule" id="PRU00490"/>
    </source>
</evidence>
<evidence type="ECO:0000255" key="4">
    <source>
        <dbReference type="PROSITE-ProRule" id="PRU00541"/>
    </source>
</evidence>
<evidence type="ECO:0000255" key="5">
    <source>
        <dbReference type="PROSITE-ProRule" id="PRU00542"/>
    </source>
</evidence>
<evidence type="ECO:0000256" key="6">
    <source>
        <dbReference type="SAM" id="MobiDB-lite"/>
    </source>
</evidence>
<evidence type="ECO:0000303" key="7">
    <source>
    </source>
</evidence>
<evidence type="ECO:0000305" key="8"/>
<gene>
    <name type="primary">Chd1l</name>
</gene>
<sequence>MASGLPRFLQALPAEHGPEPLRTRVQEPDLQQWGLTGIRLRSYQLEGVNWLVQCFHCQNGCILGDEMGLGKTCQTIALLIYLVGRLNDEGPFLVLCPLSVLSNWKEEMERFAPGLSCVTYTGDKEERARLQQDLRQESGFHVLLTTYEICLKDASFLKSFSWSVLAVDEAHRLKNQSSLLHRTLSEFSAVFRLLLTGTPIQNSLRELYSLLCVVEPDLFCREQVEDFVQRYQDIEKESKSASELHRLLQPFLLRRVKAQVATELPKKTEVVVYHGMSALQKKYYKAILMKDLDAFENETAKKVKLQNILTQLRKCVDHPYLFDGVEPEPFEVGEHLIEASGKLHLLDRLLAFLYSGGHRVLLFSQMTHMLDILQDYMDYRGYSYERVDGSVRGEERHLAIKNFGNQPIFVFLLSTRAGGVGMNLTAADTVIFVDSDFNPQNDLQAAARAHRIGQNKSVKVIRLIGRDTVEEIVYRKAASKLQLTNMVIEGGHFTPGAQKPSAEADFQLSEILKFGLDKLLSSEGSSMEDIDLKSILGETKDGQWTPDALPAAAAAGGGSLEPEEGSELESRSYENHMYLFEGRDYSKEPSKEDRKSFEQLVNLQKTLLEKTSHGGRTLRNKGSVLIPGLAEGPIKRKKILSPEELEDRRKKRQEAAAKRKRLMEEKRKEKEEAEHRKKMAWWESNGYQSFCLSSEDSELEDLEGGDESSAELAYEDLDSTSINYVSGDVTHPQAGEEDAVIVHCVDDSGRWGRGGLFTALEVRSAEPRKIYELAGKMEDLSLGDVLLFPIDDKESRDKGQDLLALVVAQHRDRTNVLSGIKMAALEEGLKKIFLAAKKKKASVHLPRIGHATKGFNWYGTERLIRKHLATRGIPTYIYYFPRSKARHSQPASSSSAPLVP</sequence>
<reference key="1">
    <citation type="journal article" date="2005" name="Science">
        <title>The transcriptional landscape of the mammalian genome.</title>
        <authorList>
            <person name="Carninci P."/>
            <person name="Kasukawa T."/>
            <person name="Katayama S."/>
            <person name="Gough J."/>
            <person name="Frith M.C."/>
            <person name="Maeda N."/>
            <person name="Oyama R."/>
            <person name="Ravasi T."/>
            <person name="Lenhard B."/>
            <person name="Wells C."/>
            <person name="Kodzius R."/>
            <person name="Shimokawa K."/>
            <person name="Bajic V.B."/>
            <person name="Brenner S.E."/>
            <person name="Batalov S."/>
            <person name="Forrest A.R."/>
            <person name="Zavolan M."/>
            <person name="Davis M.J."/>
            <person name="Wilming L.G."/>
            <person name="Aidinis V."/>
            <person name="Allen J.E."/>
            <person name="Ambesi-Impiombato A."/>
            <person name="Apweiler R."/>
            <person name="Aturaliya R.N."/>
            <person name="Bailey T.L."/>
            <person name="Bansal M."/>
            <person name="Baxter L."/>
            <person name="Beisel K.W."/>
            <person name="Bersano T."/>
            <person name="Bono H."/>
            <person name="Chalk A.M."/>
            <person name="Chiu K.P."/>
            <person name="Choudhary V."/>
            <person name="Christoffels A."/>
            <person name="Clutterbuck D.R."/>
            <person name="Crowe M.L."/>
            <person name="Dalla E."/>
            <person name="Dalrymple B.P."/>
            <person name="de Bono B."/>
            <person name="Della Gatta G."/>
            <person name="di Bernardo D."/>
            <person name="Down T."/>
            <person name="Engstrom P."/>
            <person name="Fagiolini M."/>
            <person name="Faulkner G."/>
            <person name="Fletcher C.F."/>
            <person name="Fukushima T."/>
            <person name="Furuno M."/>
            <person name="Futaki S."/>
            <person name="Gariboldi M."/>
            <person name="Georgii-Hemming P."/>
            <person name="Gingeras T.R."/>
            <person name="Gojobori T."/>
            <person name="Green R.E."/>
            <person name="Gustincich S."/>
            <person name="Harbers M."/>
            <person name="Hayashi Y."/>
            <person name="Hensch T.K."/>
            <person name="Hirokawa N."/>
            <person name="Hill D."/>
            <person name="Huminiecki L."/>
            <person name="Iacono M."/>
            <person name="Ikeo K."/>
            <person name="Iwama A."/>
            <person name="Ishikawa T."/>
            <person name="Jakt M."/>
            <person name="Kanapin A."/>
            <person name="Katoh M."/>
            <person name="Kawasawa Y."/>
            <person name="Kelso J."/>
            <person name="Kitamura H."/>
            <person name="Kitano H."/>
            <person name="Kollias G."/>
            <person name="Krishnan S.P."/>
            <person name="Kruger A."/>
            <person name="Kummerfeld S.K."/>
            <person name="Kurochkin I.V."/>
            <person name="Lareau L.F."/>
            <person name="Lazarevic D."/>
            <person name="Lipovich L."/>
            <person name="Liu J."/>
            <person name="Liuni S."/>
            <person name="McWilliam S."/>
            <person name="Madan Babu M."/>
            <person name="Madera M."/>
            <person name="Marchionni L."/>
            <person name="Matsuda H."/>
            <person name="Matsuzawa S."/>
            <person name="Miki H."/>
            <person name="Mignone F."/>
            <person name="Miyake S."/>
            <person name="Morris K."/>
            <person name="Mottagui-Tabar S."/>
            <person name="Mulder N."/>
            <person name="Nakano N."/>
            <person name="Nakauchi H."/>
            <person name="Ng P."/>
            <person name="Nilsson R."/>
            <person name="Nishiguchi S."/>
            <person name="Nishikawa S."/>
            <person name="Nori F."/>
            <person name="Ohara O."/>
            <person name="Okazaki Y."/>
            <person name="Orlando V."/>
            <person name="Pang K.C."/>
            <person name="Pavan W.J."/>
            <person name="Pavesi G."/>
            <person name="Pesole G."/>
            <person name="Petrovsky N."/>
            <person name="Piazza S."/>
            <person name="Reed J."/>
            <person name="Reid J.F."/>
            <person name="Ring B.Z."/>
            <person name="Ringwald M."/>
            <person name="Rost B."/>
            <person name="Ruan Y."/>
            <person name="Salzberg S.L."/>
            <person name="Sandelin A."/>
            <person name="Schneider C."/>
            <person name="Schoenbach C."/>
            <person name="Sekiguchi K."/>
            <person name="Semple C.A."/>
            <person name="Seno S."/>
            <person name="Sessa L."/>
            <person name="Sheng Y."/>
            <person name="Shibata Y."/>
            <person name="Shimada H."/>
            <person name="Shimada K."/>
            <person name="Silva D."/>
            <person name="Sinclair B."/>
            <person name="Sperling S."/>
            <person name="Stupka E."/>
            <person name="Sugiura K."/>
            <person name="Sultana R."/>
            <person name="Takenaka Y."/>
            <person name="Taki K."/>
            <person name="Tammoja K."/>
            <person name="Tan S.L."/>
            <person name="Tang S."/>
            <person name="Taylor M.S."/>
            <person name="Tegner J."/>
            <person name="Teichmann S.A."/>
            <person name="Ueda H.R."/>
            <person name="van Nimwegen E."/>
            <person name="Verardo R."/>
            <person name="Wei C.L."/>
            <person name="Yagi K."/>
            <person name="Yamanishi H."/>
            <person name="Zabarovsky E."/>
            <person name="Zhu S."/>
            <person name="Zimmer A."/>
            <person name="Hide W."/>
            <person name="Bult C."/>
            <person name="Grimmond S.M."/>
            <person name="Teasdale R.D."/>
            <person name="Liu E.T."/>
            <person name="Brusic V."/>
            <person name="Quackenbush J."/>
            <person name="Wahlestedt C."/>
            <person name="Mattick J.S."/>
            <person name="Hume D.A."/>
            <person name="Kai C."/>
            <person name="Sasaki D."/>
            <person name="Tomaru Y."/>
            <person name="Fukuda S."/>
            <person name="Kanamori-Katayama M."/>
            <person name="Suzuki M."/>
            <person name="Aoki J."/>
            <person name="Arakawa T."/>
            <person name="Iida J."/>
            <person name="Imamura K."/>
            <person name="Itoh M."/>
            <person name="Kato T."/>
            <person name="Kawaji H."/>
            <person name="Kawagashira N."/>
            <person name="Kawashima T."/>
            <person name="Kojima M."/>
            <person name="Kondo S."/>
            <person name="Konno H."/>
            <person name="Nakano K."/>
            <person name="Ninomiya N."/>
            <person name="Nishio T."/>
            <person name="Okada M."/>
            <person name="Plessy C."/>
            <person name="Shibata K."/>
            <person name="Shiraki T."/>
            <person name="Suzuki S."/>
            <person name="Tagami M."/>
            <person name="Waki K."/>
            <person name="Watahiki A."/>
            <person name="Okamura-Oho Y."/>
            <person name="Suzuki H."/>
            <person name="Kawai J."/>
            <person name="Hayashizaki Y."/>
        </authorList>
    </citation>
    <scope>NUCLEOTIDE SEQUENCE [LARGE SCALE MRNA] (ISOFORMS 1 AND 2)</scope>
    <source>
        <strain>C57BL/6J</strain>
        <tissue>Kidney</tissue>
        <tissue>Liver</tissue>
    </source>
</reference>
<reference key="2">
    <citation type="journal article" date="2004" name="Genome Res.">
        <title>The status, quality, and expansion of the NIH full-length cDNA project: the Mammalian Gene Collection (MGC).</title>
        <authorList>
            <consortium name="The MGC Project Team"/>
        </authorList>
    </citation>
    <scope>NUCLEOTIDE SEQUENCE [LARGE SCALE MRNA] (ISOFORM 1)</scope>
    <source>
        <strain>C57BL/6J</strain>
        <tissue>Brain</tissue>
    </source>
</reference>
<reference key="3">
    <citation type="journal article" date="2010" name="Cell">
        <title>A tissue-specific atlas of mouse protein phosphorylation and expression.</title>
        <authorList>
            <person name="Huttlin E.L."/>
            <person name="Jedrychowski M.P."/>
            <person name="Elias J.E."/>
            <person name="Goswami T."/>
            <person name="Rad R."/>
            <person name="Beausoleil S.A."/>
            <person name="Villen J."/>
            <person name="Haas W."/>
            <person name="Sowa M.E."/>
            <person name="Gygi S.P."/>
        </authorList>
    </citation>
    <scope>IDENTIFICATION BY MASS SPECTROMETRY [LARGE SCALE ANALYSIS]</scope>
    <source>
        <tissue>Spleen</tissue>
        <tissue>Testis</tissue>
    </source>
</reference>
<dbReference type="EC" id="3.6.4.-" evidence="1"/>
<dbReference type="EMBL" id="AK014473">
    <property type="protein sequence ID" value="BAB29376.1"/>
    <property type="molecule type" value="mRNA"/>
</dbReference>
<dbReference type="EMBL" id="AK165656">
    <property type="protein sequence ID" value="BAE38319.1"/>
    <property type="molecule type" value="mRNA"/>
</dbReference>
<dbReference type="EMBL" id="BC052385">
    <property type="protein sequence ID" value="AAH52385.1"/>
    <property type="molecule type" value="mRNA"/>
</dbReference>
<dbReference type="EMBL" id="BC057567">
    <property type="protein sequence ID" value="AAH57567.1"/>
    <property type="molecule type" value="mRNA"/>
</dbReference>
<dbReference type="EMBL" id="BC062966">
    <property type="protein sequence ID" value="AAH62966.1"/>
    <property type="molecule type" value="mRNA"/>
</dbReference>
<dbReference type="CCDS" id="CCDS38561.1">
    <molecule id="Q9CXF7-1"/>
</dbReference>
<dbReference type="RefSeq" id="NP_080815.1">
    <molecule id="Q9CXF7-1"/>
    <property type="nucleotide sequence ID" value="NM_026539.3"/>
</dbReference>
<dbReference type="SMR" id="Q9CXF7"/>
<dbReference type="BioGRID" id="212634">
    <property type="interactions" value="1"/>
</dbReference>
<dbReference type="DIP" id="DIP-58953N"/>
<dbReference type="FunCoup" id="Q9CXF7">
    <property type="interactions" value="2273"/>
</dbReference>
<dbReference type="IntAct" id="Q9CXF7">
    <property type="interactions" value="1"/>
</dbReference>
<dbReference type="STRING" id="10090.ENSMUSP00000029730"/>
<dbReference type="iPTMnet" id="Q9CXF7"/>
<dbReference type="PhosphoSitePlus" id="Q9CXF7"/>
<dbReference type="SwissPalm" id="Q9CXF7"/>
<dbReference type="jPOST" id="Q9CXF7"/>
<dbReference type="PaxDb" id="10090-ENSMUSP00000029730"/>
<dbReference type="PeptideAtlas" id="Q9CXF7"/>
<dbReference type="ProteomicsDB" id="283825">
    <molecule id="Q9CXF7-1"/>
</dbReference>
<dbReference type="ProteomicsDB" id="283826">
    <molecule id="Q9CXF7-2"/>
</dbReference>
<dbReference type="Pumba" id="Q9CXF7"/>
<dbReference type="Antibodypedia" id="20241">
    <property type="antibodies" value="198 antibodies from 30 providers"/>
</dbReference>
<dbReference type="DNASU" id="68058"/>
<dbReference type="Ensembl" id="ENSMUST00000029730.5">
    <molecule id="Q9CXF7-1"/>
    <property type="protein sequence ID" value="ENSMUSP00000029730.5"/>
    <property type="gene ID" value="ENSMUSG00000028089.6"/>
</dbReference>
<dbReference type="GeneID" id="68058"/>
<dbReference type="KEGG" id="mmu:68058"/>
<dbReference type="UCSC" id="uc008qow.1">
    <molecule id="Q9CXF7-1"/>
    <property type="organism name" value="mouse"/>
</dbReference>
<dbReference type="UCSC" id="uc008qox.1">
    <molecule id="Q9CXF7-2"/>
    <property type="organism name" value="mouse"/>
</dbReference>
<dbReference type="AGR" id="MGI:1915308"/>
<dbReference type="CTD" id="9557"/>
<dbReference type="MGI" id="MGI:1915308">
    <property type="gene designation" value="Chd1l"/>
</dbReference>
<dbReference type="VEuPathDB" id="HostDB:ENSMUSG00000028089"/>
<dbReference type="eggNOG" id="KOG0385">
    <property type="taxonomic scope" value="Eukaryota"/>
</dbReference>
<dbReference type="GeneTree" id="ENSGT00940000159402"/>
<dbReference type="HOGENOM" id="CLU_000315_17_9_1"/>
<dbReference type="InParanoid" id="Q9CXF7"/>
<dbReference type="OMA" id="WQNELFR"/>
<dbReference type="OrthoDB" id="448448at2759"/>
<dbReference type="PhylomeDB" id="Q9CXF7"/>
<dbReference type="TreeFam" id="TF333326"/>
<dbReference type="Reactome" id="R-MMU-5696395">
    <property type="pathway name" value="Formation of Incision Complex in GG-NER"/>
</dbReference>
<dbReference type="Reactome" id="R-MMU-5696400">
    <property type="pathway name" value="Dual Incision in GG-NER"/>
</dbReference>
<dbReference type="BioGRID-ORCS" id="68058">
    <property type="hits" value="7 hits in 116 CRISPR screens"/>
</dbReference>
<dbReference type="ChiTaRS" id="Chd1l">
    <property type="organism name" value="mouse"/>
</dbReference>
<dbReference type="PRO" id="PR:Q9CXF7"/>
<dbReference type="Proteomes" id="UP000000589">
    <property type="component" value="Chromosome 3"/>
</dbReference>
<dbReference type="RNAct" id="Q9CXF7">
    <property type="molecule type" value="protein"/>
</dbReference>
<dbReference type="Bgee" id="ENSMUSG00000028089">
    <property type="expression patterns" value="Expressed in saccule of membranous labyrinth and 239 other cell types or tissues"/>
</dbReference>
<dbReference type="GO" id="GO:0005654">
    <property type="term" value="C:nucleoplasm"/>
    <property type="evidence" value="ECO:0007669"/>
    <property type="project" value="Ensembl"/>
</dbReference>
<dbReference type="GO" id="GO:0005634">
    <property type="term" value="C:nucleus"/>
    <property type="evidence" value="ECO:0000250"/>
    <property type="project" value="UniProtKB"/>
</dbReference>
<dbReference type="GO" id="GO:0035861">
    <property type="term" value="C:site of double-strand break"/>
    <property type="evidence" value="ECO:0000250"/>
    <property type="project" value="UniProtKB"/>
</dbReference>
<dbReference type="GO" id="GO:0005524">
    <property type="term" value="F:ATP binding"/>
    <property type="evidence" value="ECO:0007669"/>
    <property type="project" value="UniProtKB-KW"/>
</dbReference>
<dbReference type="GO" id="GO:0016887">
    <property type="term" value="F:ATP hydrolysis activity"/>
    <property type="evidence" value="ECO:0000250"/>
    <property type="project" value="UniProtKB"/>
</dbReference>
<dbReference type="GO" id="GO:0140658">
    <property type="term" value="F:ATP-dependent chromatin remodeler activity"/>
    <property type="evidence" value="ECO:0000250"/>
    <property type="project" value="UniProtKB"/>
</dbReference>
<dbReference type="GO" id="GO:0003678">
    <property type="term" value="F:DNA helicase activity"/>
    <property type="evidence" value="ECO:0007669"/>
    <property type="project" value="InterPro"/>
</dbReference>
<dbReference type="GO" id="GO:0140566">
    <property type="term" value="F:histone reader activity"/>
    <property type="evidence" value="ECO:0000250"/>
    <property type="project" value="UniProtKB"/>
</dbReference>
<dbReference type="GO" id="GO:0031491">
    <property type="term" value="F:nucleosome binding"/>
    <property type="evidence" value="ECO:0000250"/>
    <property type="project" value="UniProtKB"/>
</dbReference>
<dbReference type="GO" id="GO:0000166">
    <property type="term" value="F:nucleotide binding"/>
    <property type="evidence" value="ECO:0000250"/>
    <property type="project" value="UniProtKB"/>
</dbReference>
<dbReference type="GO" id="GO:0160004">
    <property type="term" value="F:poly-ADP-D-ribose modification-dependent protein binding"/>
    <property type="evidence" value="ECO:0000250"/>
    <property type="project" value="UniProtKB"/>
</dbReference>
<dbReference type="GO" id="GO:0006338">
    <property type="term" value="P:chromatin remodeling"/>
    <property type="evidence" value="ECO:0000250"/>
    <property type="project" value="UniProtKB"/>
</dbReference>
<dbReference type="GO" id="GO:0006974">
    <property type="term" value="P:DNA damage response"/>
    <property type="evidence" value="ECO:0000250"/>
    <property type="project" value="UniProtKB"/>
</dbReference>
<dbReference type="GO" id="GO:0006281">
    <property type="term" value="P:DNA repair"/>
    <property type="evidence" value="ECO:0007669"/>
    <property type="project" value="UniProtKB-KW"/>
</dbReference>
<dbReference type="CDD" id="cd18006">
    <property type="entry name" value="DEXHc_CHD1L"/>
    <property type="match status" value="1"/>
</dbReference>
<dbReference type="CDD" id="cd03331">
    <property type="entry name" value="Macro_Poa1p-like_SNF2"/>
    <property type="match status" value="1"/>
</dbReference>
<dbReference type="CDD" id="cd18793">
    <property type="entry name" value="SF2_C_SNF"/>
    <property type="match status" value="1"/>
</dbReference>
<dbReference type="FunFam" id="3.40.220.10:FF:000004">
    <property type="entry name" value="chromodomain-helicase-DNA-binding protein 1-like isoform X1"/>
    <property type="match status" value="1"/>
</dbReference>
<dbReference type="FunFam" id="3.40.50.10810:FF:000037">
    <property type="entry name" value="chromodomain-helicase-DNA-binding protein 1-like isoform X1"/>
    <property type="match status" value="1"/>
</dbReference>
<dbReference type="FunFam" id="3.40.50.300:FF:000607">
    <property type="entry name" value="chromodomain-helicase-DNA-binding protein 1-like isoform X1"/>
    <property type="match status" value="1"/>
</dbReference>
<dbReference type="Gene3D" id="3.40.220.10">
    <property type="entry name" value="Leucine Aminopeptidase, subunit E, domain 1"/>
    <property type="match status" value="1"/>
</dbReference>
<dbReference type="Gene3D" id="3.40.50.300">
    <property type="entry name" value="P-loop containing nucleotide triphosphate hydrolases"/>
    <property type="match status" value="1"/>
</dbReference>
<dbReference type="Gene3D" id="3.40.50.10810">
    <property type="entry name" value="Tandem AAA-ATPase domain"/>
    <property type="match status" value="1"/>
</dbReference>
<dbReference type="InterPro" id="IPR031053">
    <property type="entry name" value="ALC1"/>
</dbReference>
<dbReference type="InterPro" id="IPR014001">
    <property type="entry name" value="Helicase_ATP-bd"/>
</dbReference>
<dbReference type="InterPro" id="IPR001650">
    <property type="entry name" value="Helicase_C-like"/>
</dbReference>
<dbReference type="InterPro" id="IPR002589">
    <property type="entry name" value="Macro_dom"/>
</dbReference>
<dbReference type="InterPro" id="IPR043472">
    <property type="entry name" value="Macro_dom-like"/>
</dbReference>
<dbReference type="InterPro" id="IPR027417">
    <property type="entry name" value="P-loop_NTPase"/>
</dbReference>
<dbReference type="InterPro" id="IPR038718">
    <property type="entry name" value="SNF2-like_sf"/>
</dbReference>
<dbReference type="InterPro" id="IPR049730">
    <property type="entry name" value="SNF2/RAD54-like_C"/>
</dbReference>
<dbReference type="InterPro" id="IPR000330">
    <property type="entry name" value="SNF2_N"/>
</dbReference>
<dbReference type="PANTHER" id="PTHR47157">
    <property type="entry name" value="CHROMODOMAIN-HELICASE-DNA-BINDING PROTEIN 1-LIKE"/>
    <property type="match status" value="1"/>
</dbReference>
<dbReference type="PANTHER" id="PTHR47157:SF1">
    <property type="entry name" value="CHROMODOMAIN-HELICASE-DNA-BINDING PROTEIN 1-LIKE"/>
    <property type="match status" value="1"/>
</dbReference>
<dbReference type="Pfam" id="PF00271">
    <property type="entry name" value="Helicase_C"/>
    <property type="match status" value="1"/>
</dbReference>
<dbReference type="Pfam" id="PF00176">
    <property type="entry name" value="SNF2-rel_dom"/>
    <property type="match status" value="1"/>
</dbReference>
<dbReference type="SMART" id="SM00487">
    <property type="entry name" value="DEXDc"/>
    <property type="match status" value="1"/>
</dbReference>
<dbReference type="SMART" id="SM00490">
    <property type="entry name" value="HELICc"/>
    <property type="match status" value="1"/>
</dbReference>
<dbReference type="SUPFAM" id="SSF52949">
    <property type="entry name" value="Macro domain-like"/>
    <property type="match status" value="1"/>
</dbReference>
<dbReference type="SUPFAM" id="SSF52540">
    <property type="entry name" value="P-loop containing nucleoside triphosphate hydrolases"/>
    <property type="match status" value="2"/>
</dbReference>
<dbReference type="PROSITE" id="PS51192">
    <property type="entry name" value="HELICASE_ATP_BIND_1"/>
    <property type="match status" value="1"/>
</dbReference>
<dbReference type="PROSITE" id="PS51194">
    <property type="entry name" value="HELICASE_CTER"/>
    <property type="match status" value="1"/>
</dbReference>
<dbReference type="PROSITE" id="PS51154">
    <property type="entry name" value="MACRO"/>
    <property type="match status" value="1"/>
</dbReference>
<feature type="chain" id="PRO_0000332142" description="Chromodomain-helicase-DNA-binding protein 1-like">
    <location>
        <begin position="1"/>
        <end position="900"/>
    </location>
</feature>
<feature type="domain" description="Helicase ATP-binding" evidence="4">
    <location>
        <begin position="52"/>
        <end position="217"/>
    </location>
</feature>
<feature type="domain" description="Helicase C-terminal" evidence="5">
    <location>
        <begin position="345"/>
        <end position="507"/>
    </location>
</feature>
<feature type="domain" description="Macro" evidence="3">
    <location>
        <begin position="709"/>
        <end position="900"/>
    </location>
</feature>
<feature type="region of interest" description="Disordered" evidence="6">
    <location>
        <begin position="546"/>
        <end position="569"/>
    </location>
</feature>
<feature type="region of interest" description="Regulatory linker segment (RLS)" evidence="1">
    <location>
        <begin position="606"/>
        <end position="640"/>
    </location>
</feature>
<feature type="region of interest" description="Required for ATPase activity" evidence="1">
    <location>
        <begin position="620"/>
        <end position="678"/>
    </location>
</feature>
<feature type="region of interest" description="Disordered" evidence="6">
    <location>
        <begin position="641"/>
        <end position="673"/>
    </location>
</feature>
<feature type="coiled-coil region" evidence="2">
    <location>
        <begin position="643"/>
        <end position="680"/>
    </location>
</feature>
<feature type="short sequence motif" description="DEAH box">
    <location>
        <begin position="168"/>
        <end position="171"/>
    </location>
</feature>
<feature type="compositionally biased region" description="Basic and acidic residues" evidence="6">
    <location>
        <begin position="653"/>
        <end position="673"/>
    </location>
</feature>
<feature type="binding site" evidence="4">
    <location>
        <begin position="65"/>
        <end position="72"/>
    </location>
    <ligand>
        <name>ATP</name>
        <dbReference type="ChEBI" id="CHEBI:30616"/>
    </ligand>
</feature>
<feature type="modified residue" description="Phosphoserine" evidence="1">
    <location>
        <position position="534"/>
    </location>
</feature>
<feature type="modified residue" description="Phosphoserine" evidence="1">
    <location>
        <position position="612"/>
    </location>
</feature>
<feature type="modified residue" description="Phosphoserine" evidence="1">
    <location>
        <position position="623"/>
    </location>
</feature>
<feature type="modified residue" description="Phosphoserine" evidence="1">
    <location>
        <position position="641"/>
    </location>
</feature>
<feature type="modified residue" description="Phosphoserine" evidence="1">
    <location>
        <position position="894"/>
    </location>
</feature>
<feature type="splice variant" id="VSP_033343" description="In isoform 2." evidence="7">
    <original>IYYFPRSKARHSQPASSSSAPLVP</original>
    <variation>MYPSVV</variation>
    <location>
        <begin position="877"/>
        <end position="900"/>
    </location>
</feature>
<feature type="sequence conflict" description="In Ref. 2; AAH62966/AAH57567." evidence="8" ref="2">
    <original>A</original>
    <variation>S</variation>
    <location>
        <position position="300"/>
    </location>
</feature>
<feature type="sequence conflict" description="In Ref. 1; BAE38319." evidence="8" ref="1">
    <original>G</original>
    <variation>GG</variation>
    <location>
        <position position="558"/>
    </location>
</feature>